<organism>
    <name type="scientific">Xenopus laevis</name>
    <name type="common">African clawed frog</name>
    <dbReference type="NCBI Taxonomy" id="8355"/>
    <lineage>
        <taxon>Eukaryota</taxon>
        <taxon>Metazoa</taxon>
        <taxon>Chordata</taxon>
        <taxon>Craniata</taxon>
        <taxon>Vertebrata</taxon>
        <taxon>Euteleostomi</taxon>
        <taxon>Amphibia</taxon>
        <taxon>Batrachia</taxon>
        <taxon>Anura</taxon>
        <taxon>Pipoidea</taxon>
        <taxon>Pipidae</taxon>
        <taxon>Xenopodinae</taxon>
        <taxon>Xenopus</taxon>
        <taxon>Xenopus</taxon>
    </lineage>
</organism>
<evidence type="ECO:0000250" key="1"/>
<evidence type="ECO:0000305" key="2"/>
<keyword id="KW-0143">Chaperone</keyword>
<keyword id="KW-1015">Disulfide bond</keyword>
<keyword id="KW-0472">Membrane</keyword>
<keyword id="KW-0479">Metal-binding</keyword>
<keyword id="KW-0496">Mitochondrion</keyword>
<keyword id="KW-0999">Mitochondrion inner membrane</keyword>
<keyword id="KW-0653">Protein transport</keyword>
<keyword id="KW-1185">Reference proteome</keyword>
<keyword id="KW-0811">Translocation</keyword>
<keyword id="KW-0813">Transport</keyword>
<keyword id="KW-0862">Zinc</keyword>
<gene>
    <name type="primary">timm10-b</name>
    <name type="synonym">tim10-b</name>
</gene>
<accession>Q6GQ52</accession>
<reference key="1">
    <citation type="submission" date="2004-06" db="EMBL/GenBank/DDBJ databases">
        <authorList>
            <consortium name="NIH - Xenopus Gene Collection (XGC) project"/>
        </authorList>
    </citation>
    <scope>NUCLEOTIDE SEQUENCE [LARGE SCALE MRNA]</scope>
    <source>
        <tissue>Ovary</tissue>
    </source>
</reference>
<proteinExistence type="inferred from homology"/>
<dbReference type="EMBL" id="BC072896">
    <property type="protein sequence ID" value="AAH72896.1"/>
    <property type="molecule type" value="mRNA"/>
</dbReference>
<dbReference type="RefSeq" id="NP_001085530.1">
    <property type="nucleotide sequence ID" value="NM_001092061.1"/>
</dbReference>
<dbReference type="SMR" id="Q6GQ52"/>
<dbReference type="GeneID" id="443956"/>
<dbReference type="KEGG" id="xla:443956"/>
<dbReference type="AGR" id="Xenbase:XB-GENE-6251518"/>
<dbReference type="CTD" id="443956"/>
<dbReference type="Xenbase" id="XB-GENE-6251518">
    <property type="gene designation" value="timm10.L"/>
</dbReference>
<dbReference type="OrthoDB" id="274922at2759"/>
<dbReference type="Proteomes" id="UP000186698">
    <property type="component" value="Chromosome 1L"/>
</dbReference>
<dbReference type="Bgee" id="443956">
    <property type="expression patterns" value="Expressed in gastrula and 19 other cell types or tissues"/>
</dbReference>
<dbReference type="GO" id="GO:0005743">
    <property type="term" value="C:mitochondrial inner membrane"/>
    <property type="evidence" value="ECO:0000318"/>
    <property type="project" value="GO_Central"/>
</dbReference>
<dbReference type="GO" id="GO:0046872">
    <property type="term" value="F:metal ion binding"/>
    <property type="evidence" value="ECO:0007669"/>
    <property type="project" value="UniProtKB-KW"/>
</dbReference>
<dbReference type="GO" id="GO:0045039">
    <property type="term" value="P:protein insertion into mitochondrial inner membrane"/>
    <property type="evidence" value="ECO:0000318"/>
    <property type="project" value="GO_Central"/>
</dbReference>
<dbReference type="FunFam" id="1.10.287.810:FF:000002">
    <property type="entry name" value="Mitochondrial import inner membrane translocase subunit tim10"/>
    <property type="match status" value="1"/>
</dbReference>
<dbReference type="Gene3D" id="1.10.287.810">
    <property type="entry name" value="Mitochondrial import inner membrane translocase subunit tim13 like domains"/>
    <property type="match status" value="1"/>
</dbReference>
<dbReference type="InterPro" id="IPR004217">
    <property type="entry name" value="Tim10-like"/>
</dbReference>
<dbReference type="InterPro" id="IPR035427">
    <property type="entry name" value="Tim10-like_dom_sf"/>
</dbReference>
<dbReference type="PANTHER" id="PTHR11038">
    <property type="entry name" value="MITOCHONDRIAL IMPORT INNER MEMBRANE TRANSLOCASE SUBUNIT TIM10"/>
    <property type="match status" value="1"/>
</dbReference>
<dbReference type="PANTHER" id="PTHR11038:SF16">
    <property type="entry name" value="MITOCHONDRIAL IMPORT INNER MEMBRANE TRANSLOCASE SUBUNIT TIM10"/>
    <property type="match status" value="1"/>
</dbReference>
<dbReference type="Pfam" id="PF02953">
    <property type="entry name" value="zf-Tim10_DDP"/>
    <property type="match status" value="1"/>
</dbReference>
<dbReference type="SUPFAM" id="SSF144122">
    <property type="entry name" value="Tim10-like"/>
    <property type="match status" value="1"/>
</dbReference>
<name>TI10B_XENLA</name>
<feature type="chain" id="PRO_0000228056" description="Mitochondrial import inner membrane translocase subunit Tim10-B">
    <location>
        <begin position="1"/>
        <end position="90"/>
    </location>
</feature>
<feature type="short sequence motif" description="Twin CX3C motif">
    <location>
        <begin position="29"/>
        <end position="54"/>
    </location>
</feature>
<feature type="disulfide bond" evidence="1">
    <location>
        <begin position="29"/>
        <end position="54"/>
    </location>
</feature>
<feature type="disulfide bond" evidence="1">
    <location>
        <begin position="33"/>
        <end position="50"/>
    </location>
</feature>
<protein>
    <recommendedName>
        <fullName>Mitochondrial import inner membrane translocase subunit Tim10-B</fullName>
    </recommendedName>
</protein>
<sequence length="90" mass="10279">MDPLKAQQLAAELEVEMMADMYNRMTGACHKKCVPPHYKEAELSKGESVCLDRCVSKYLDIHERMGKKLTELSLQDEELMKKMQQGVTST</sequence>
<comment type="function">
    <text evidence="1">Mitochondrial intermembrane chaperone that participates in the import and insertion of multi-pass transmembrane proteins into the mitochondrial inner membrane. May also be required for the transfer of beta-barrel precursors from the TOM complex to the sorting and assembly machinery (SAM complex) of the outer membrane. Acts as a chaperone-like protein that protects the hydrophobic precursors from aggregation and guide them through the mitochondrial intermembrane space (By similarity).</text>
</comment>
<comment type="subunit">
    <text evidence="1">Heterohexamer; composed of 3 copies of TIMM9 and 3 copies of TIMM10/TIM10A, named soluble 70 kDa complex. The complex forms a 6-bladed alpha-propeller structure and associates with the TIMM22 component of the TIM22 complex. Interacts with multi-pass transmembrane proteins in transit (By similarity).</text>
</comment>
<comment type="subcellular location">
    <subcellularLocation>
        <location evidence="1">Mitochondrion inner membrane</location>
        <topology evidence="1">Peripheral membrane protein</topology>
        <orientation evidence="1">Intermembrane side</orientation>
    </subcellularLocation>
</comment>
<comment type="domain">
    <text evidence="1">The twin CX3C motif contains 4 conserved Cys residues that form 2 disulfide bonds in the mitochondrial intermembrane space. However, during the transit of TIMM10 from cytoplasm into mitochondrion, the Cys residues probably coordinate zinc, thereby preventing folding and allowing its transfer across mitochondrial outer membrane (By similarity).</text>
</comment>
<comment type="similarity">
    <text evidence="2">Belongs to the small Tim family.</text>
</comment>